<comment type="function">
    <text evidence="1">Could be involved in insertion of integral membrane proteins into the membrane.</text>
</comment>
<comment type="subcellular location">
    <subcellularLocation>
        <location evidence="1">Cell inner membrane</location>
        <topology evidence="1">Peripheral membrane protein</topology>
        <orientation evidence="1">Cytoplasmic side</orientation>
    </subcellularLocation>
</comment>
<comment type="similarity">
    <text evidence="1">Belongs to the UPF0161 family.</text>
</comment>
<name>YIDD_HELPH</name>
<protein>
    <recommendedName>
        <fullName evidence="1">Putative membrane protein insertion efficiency factor</fullName>
    </recommendedName>
</protein>
<gene>
    <name type="ordered locus">HPAG1_1375</name>
</gene>
<proteinExistence type="inferred from homology"/>
<sequence>MRNNKTPFLSAIFTASIRGYQRFFSAFTPSSCRFYPTCSNYALWLLCFENPLSAMGKIAIRILSCNPFCSGGIAYPTTRLKRPSLLQSHKDFNRNFKTITFWLVPTTKSRTTYYIIKV</sequence>
<evidence type="ECO:0000255" key="1">
    <source>
        <dbReference type="HAMAP-Rule" id="MF_00386"/>
    </source>
</evidence>
<organism>
    <name type="scientific">Helicobacter pylori (strain HPAG1)</name>
    <dbReference type="NCBI Taxonomy" id="357544"/>
    <lineage>
        <taxon>Bacteria</taxon>
        <taxon>Pseudomonadati</taxon>
        <taxon>Campylobacterota</taxon>
        <taxon>Epsilonproteobacteria</taxon>
        <taxon>Campylobacterales</taxon>
        <taxon>Helicobacteraceae</taxon>
        <taxon>Helicobacter</taxon>
    </lineage>
</organism>
<accession>Q1CRI0</accession>
<keyword id="KW-0997">Cell inner membrane</keyword>
<keyword id="KW-1003">Cell membrane</keyword>
<keyword id="KW-0472">Membrane</keyword>
<reference key="1">
    <citation type="journal article" date="2006" name="Proc. Natl. Acad. Sci. U.S.A.">
        <title>The complete genome sequence of a chronic atrophic gastritis Helicobacter pylori strain: evolution during disease progression.</title>
        <authorList>
            <person name="Oh J.D."/>
            <person name="Kling-Baeckhed H."/>
            <person name="Giannakis M."/>
            <person name="Xu J."/>
            <person name="Fulton R.S."/>
            <person name="Fulton L.A."/>
            <person name="Cordum H.S."/>
            <person name="Wang C."/>
            <person name="Elliott G."/>
            <person name="Edwards J."/>
            <person name="Mardis E.R."/>
            <person name="Engstrand L.G."/>
            <person name="Gordon J.I."/>
        </authorList>
    </citation>
    <scope>NUCLEOTIDE SEQUENCE [LARGE SCALE GENOMIC DNA]</scope>
    <source>
        <strain>HPAG1</strain>
    </source>
</reference>
<feature type="chain" id="PRO_0000253113" description="Putative membrane protein insertion efficiency factor">
    <location>
        <begin position="1"/>
        <end position="118"/>
    </location>
</feature>
<dbReference type="EMBL" id="CP000241">
    <property type="protein sequence ID" value="ABF85442.1"/>
    <property type="molecule type" value="Genomic_DNA"/>
</dbReference>
<dbReference type="RefSeq" id="WP_001245506.1">
    <property type="nucleotide sequence ID" value="NC_008086.1"/>
</dbReference>
<dbReference type="KEGG" id="hpa:HPAG1_1375"/>
<dbReference type="HOGENOM" id="CLU_144811_4_0_7"/>
<dbReference type="GO" id="GO:0005886">
    <property type="term" value="C:plasma membrane"/>
    <property type="evidence" value="ECO:0007669"/>
    <property type="project" value="UniProtKB-SubCell"/>
</dbReference>
<dbReference type="HAMAP" id="MF_00386">
    <property type="entry name" value="UPF0161_YidD"/>
    <property type="match status" value="1"/>
</dbReference>
<dbReference type="InterPro" id="IPR002696">
    <property type="entry name" value="Membr_insert_effic_factor_YidD"/>
</dbReference>
<dbReference type="NCBIfam" id="TIGR00278">
    <property type="entry name" value="membrane protein insertion efficiency factor YidD"/>
    <property type="match status" value="1"/>
</dbReference>
<dbReference type="PANTHER" id="PTHR33383">
    <property type="entry name" value="MEMBRANE PROTEIN INSERTION EFFICIENCY FACTOR-RELATED"/>
    <property type="match status" value="1"/>
</dbReference>
<dbReference type="PANTHER" id="PTHR33383:SF1">
    <property type="entry name" value="MEMBRANE PROTEIN INSERTION EFFICIENCY FACTOR-RELATED"/>
    <property type="match status" value="1"/>
</dbReference>
<dbReference type="Pfam" id="PF01809">
    <property type="entry name" value="YidD"/>
    <property type="match status" value="1"/>
</dbReference>
<dbReference type="SMART" id="SM01234">
    <property type="entry name" value="Haemolytic"/>
    <property type="match status" value="1"/>
</dbReference>